<accession>A8H1Q5</accession>
<evidence type="ECO:0000255" key="1">
    <source>
        <dbReference type="HAMAP-Rule" id="MF_00178"/>
    </source>
</evidence>
<sequence>MNVVQGNIESKNAKVAIVVSRFNSFVVDSLLDGAVDTLKRFGQVADENITVVKVPGAVELPLAARRVAASGKFDGIIALGAVIRGGTPHFDFVAGECNKGLAQVALEFDIPVSFGVLTTDTIEQAIERSGTKAGNKGGEAALGLLEMVNVLQALEEQL</sequence>
<organism>
    <name type="scientific">Shewanella pealeana (strain ATCC 700345 / ANG-SQ1)</name>
    <dbReference type="NCBI Taxonomy" id="398579"/>
    <lineage>
        <taxon>Bacteria</taxon>
        <taxon>Pseudomonadati</taxon>
        <taxon>Pseudomonadota</taxon>
        <taxon>Gammaproteobacteria</taxon>
        <taxon>Alteromonadales</taxon>
        <taxon>Shewanellaceae</taxon>
        <taxon>Shewanella</taxon>
    </lineage>
</organism>
<gene>
    <name evidence="1" type="primary">ribH</name>
    <name type="ordered locus">Spea_1165</name>
</gene>
<protein>
    <recommendedName>
        <fullName evidence="1">6,7-dimethyl-8-ribityllumazine synthase</fullName>
        <shortName evidence="1">DMRL synthase</shortName>
        <shortName evidence="1">LS</shortName>
        <shortName evidence="1">Lumazine synthase</shortName>
        <ecNumber evidence="1">2.5.1.78</ecNumber>
    </recommendedName>
</protein>
<reference key="1">
    <citation type="submission" date="2007-10" db="EMBL/GenBank/DDBJ databases">
        <title>Complete sequence of Shewanella pealeana ATCC 700345.</title>
        <authorList>
            <consortium name="US DOE Joint Genome Institute"/>
            <person name="Copeland A."/>
            <person name="Lucas S."/>
            <person name="Lapidus A."/>
            <person name="Barry K."/>
            <person name="Glavina del Rio T."/>
            <person name="Dalin E."/>
            <person name="Tice H."/>
            <person name="Pitluck S."/>
            <person name="Chertkov O."/>
            <person name="Brettin T."/>
            <person name="Bruce D."/>
            <person name="Detter J.C."/>
            <person name="Han C."/>
            <person name="Schmutz J."/>
            <person name="Larimer F."/>
            <person name="Land M."/>
            <person name="Hauser L."/>
            <person name="Kyrpides N."/>
            <person name="Kim E."/>
            <person name="Zhao J.-S.Z."/>
            <person name="Manno D."/>
            <person name="Hawari J."/>
            <person name="Richardson P."/>
        </authorList>
    </citation>
    <scope>NUCLEOTIDE SEQUENCE [LARGE SCALE GENOMIC DNA]</scope>
    <source>
        <strain>ATCC 700345 / ANG-SQ1</strain>
    </source>
</reference>
<proteinExistence type="inferred from homology"/>
<dbReference type="EC" id="2.5.1.78" evidence="1"/>
<dbReference type="EMBL" id="CP000851">
    <property type="protein sequence ID" value="ABV86492.1"/>
    <property type="molecule type" value="Genomic_DNA"/>
</dbReference>
<dbReference type="SMR" id="A8H1Q5"/>
<dbReference type="STRING" id="398579.Spea_1165"/>
<dbReference type="KEGG" id="spl:Spea_1165"/>
<dbReference type="eggNOG" id="COG0054">
    <property type="taxonomic scope" value="Bacteria"/>
</dbReference>
<dbReference type="HOGENOM" id="CLU_089358_1_1_6"/>
<dbReference type="OrthoDB" id="9809709at2"/>
<dbReference type="UniPathway" id="UPA00275">
    <property type="reaction ID" value="UER00404"/>
</dbReference>
<dbReference type="Proteomes" id="UP000002608">
    <property type="component" value="Chromosome"/>
</dbReference>
<dbReference type="GO" id="GO:0005829">
    <property type="term" value="C:cytosol"/>
    <property type="evidence" value="ECO:0007669"/>
    <property type="project" value="TreeGrafter"/>
</dbReference>
<dbReference type="GO" id="GO:0009349">
    <property type="term" value="C:riboflavin synthase complex"/>
    <property type="evidence" value="ECO:0007669"/>
    <property type="project" value="InterPro"/>
</dbReference>
<dbReference type="GO" id="GO:0000906">
    <property type="term" value="F:6,7-dimethyl-8-ribityllumazine synthase activity"/>
    <property type="evidence" value="ECO:0007669"/>
    <property type="project" value="UniProtKB-UniRule"/>
</dbReference>
<dbReference type="GO" id="GO:0009231">
    <property type="term" value="P:riboflavin biosynthetic process"/>
    <property type="evidence" value="ECO:0007669"/>
    <property type="project" value="UniProtKB-UniRule"/>
</dbReference>
<dbReference type="CDD" id="cd09209">
    <property type="entry name" value="Lumazine_synthase-I"/>
    <property type="match status" value="1"/>
</dbReference>
<dbReference type="FunFam" id="3.40.50.960:FF:000001">
    <property type="entry name" value="6,7-dimethyl-8-ribityllumazine synthase"/>
    <property type="match status" value="1"/>
</dbReference>
<dbReference type="Gene3D" id="3.40.50.960">
    <property type="entry name" value="Lumazine/riboflavin synthase"/>
    <property type="match status" value="1"/>
</dbReference>
<dbReference type="HAMAP" id="MF_00178">
    <property type="entry name" value="Lumazine_synth"/>
    <property type="match status" value="1"/>
</dbReference>
<dbReference type="InterPro" id="IPR034964">
    <property type="entry name" value="LS"/>
</dbReference>
<dbReference type="InterPro" id="IPR002180">
    <property type="entry name" value="LS/RS"/>
</dbReference>
<dbReference type="InterPro" id="IPR036467">
    <property type="entry name" value="LS/RS_sf"/>
</dbReference>
<dbReference type="NCBIfam" id="TIGR00114">
    <property type="entry name" value="lumazine-synth"/>
    <property type="match status" value="1"/>
</dbReference>
<dbReference type="NCBIfam" id="NF000812">
    <property type="entry name" value="PRK00061.1-4"/>
    <property type="match status" value="1"/>
</dbReference>
<dbReference type="PANTHER" id="PTHR21058:SF0">
    <property type="entry name" value="6,7-DIMETHYL-8-RIBITYLLUMAZINE SYNTHASE"/>
    <property type="match status" value="1"/>
</dbReference>
<dbReference type="PANTHER" id="PTHR21058">
    <property type="entry name" value="6,7-DIMETHYL-8-RIBITYLLUMAZINE SYNTHASE DMRL SYNTHASE LUMAZINE SYNTHASE"/>
    <property type="match status" value="1"/>
</dbReference>
<dbReference type="Pfam" id="PF00885">
    <property type="entry name" value="DMRL_synthase"/>
    <property type="match status" value="1"/>
</dbReference>
<dbReference type="SUPFAM" id="SSF52121">
    <property type="entry name" value="Lumazine synthase"/>
    <property type="match status" value="1"/>
</dbReference>
<comment type="function">
    <text evidence="1">Catalyzes the formation of 6,7-dimethyl-8-ribityllumazine by condensation of 5-amino-6-(D-ribitylamino)uracil with 3,4-dihydroxy-2-butanone 4-phosphate. This is the penultimate step in the biosynthesis of riboflavin.</text>
</comment>
<comment type="catalytic activity">
    <reaction evidence="1">
        <text>(2S)-2-hydroxy-3-oxobutyl phosphate + 5-amino-6-(D-ribitylamino)uracil = 6,7-dimethyl-8-(1-D-ribityl)lumazine + phosphate + 2 H2O + H(+)</text>
        <dbReference type="Rhea" id="RHEA:26152"/>
        <dbReference type="ChEBI" id="CHEBI:15377"/>
        <dbReference type="ChEBI" id="CHEBI:15378"/>
        <dbReference type="ChEBI" id="CHEBI:15934"/>
        <dbReference type="ChEBI" id="CHEBI:43474"/>
        <dbReference type="ChEBI" id="CHEBI:58201"/>
        <dbReference type="ChEBI" id="CHEBI:58830"/>
        <dbReference type="EC" id="2.5.1.78"/>
    </reaction>
</comment>
<comment type="pathway">
    <text evidence="1">Cofactor biosynthesis; riboflavin biosynthesis; riboflavin from 2-hydroxy-3-oxobutyl phosphate and 5-amino-6-(D-ribitylamino)uracil: step 1/2.</text>
</comment>
<comment type="subunit">
    <text evidence="1">Forms an icosahedral capsid composed of 60 subunits, arranged as a dodecamer of pentamers.</text>
</comment>
<comment type="similarity">
    <text evidence="1">Belongs to the DMRL synthase family.</text>
</comment>
<keyword id="KW-1185">Reference proteome</keyword>
<keyword id="KW-0686">Riboflavin biosynthesis</keyword>
<keyword id="KW-0808">Transferase</keyword>
<feature type="chain" id="PRO_1000077249" description="6,7-dimethyl-8-ribityllumazine synthase">
    <location>
        <begin position="1"/>
        <end position="158"/>
    </location>
</feature>
<feature type="active site" description="Proton donor" evidence="1">
    <location>
        <position position="89"/>
    </location>
</feature>
<feature type="binding site" evidence="1">
    <location>
        <position position="22"/>
    </location>
    <ligand>
        <name>5-amino-6-(D-ribitylamino)uracil</name>
        <dbReference type="ChEBI" id="CHEBI:15934"/>
    </ligand>
</feature>
<feature type="binding site" evidence="1">
    <location>
        <begin position="57"/>
        <end position="59"/>
    </location>
    <ligand>
        <name>5-amino-6-(D-ribitylamino)uracil</name>
        <dbReference type="ChEBI" id="CHEBI:15934"/>
    </ligand>
</feature>
<feature type="binding site" evidence="1">
    <location>
        <begin position="81"/>
        <end position="83"/>
    </location>
    <ligand>
        <name>5-amino-6-(D-ribitylamino)uracil</name>
        <dbReference type="ChEBI" id="CHEBI:15934"/>
    </ligand>
</feature>
<feature type="binding site" evidence="1">
    <location>
        <begin position="86"/>
        <end position="87"/>
    </location>
    <ligand>
        <name>(2S)-2-hydroxy-3-oxobutyl phosphate</name>
        <dbReference type="ChEBI" id="CHEBI:58830"/>
    </ligand>
</feature>
<feature type="binding site" evidence="1">
    <location>
        <position position="114"/>
    </location>
    <ligand>
        <name>5-amino-6-(D-ribitylamino)uracil</name>
        <dbReference type="ChEBI" id="CHEBI:15934"/>
    </ligand>
</feature>
<feature type="binding site" evidence="1">
    <location>
        <position position="128"/>
    </location>
    <ligand>
        <name>(2S)-2-hydroxy-3-oxobutyl phosphate</name>
        <dbReference type="ChEBI" id="CHEBI:58830"/>
    </ligand>
</feature>
<name>RISB_SHEPA</name>